<dbReference type="EC" id="4.2.3.5" evidence="1"/>
<dbReference type="EMBL" id="CP000891">
    <property type="protein sequence ID" value="ABX50012.1"/>
    <property type="molecule type" value="Genomic_DNA"/>
</dbReference>
<dbReference type="RefSeq" id="WP_006082233.1">
    <property type="nucleotide sequence ID" value="NC_009997.1"/>
</dbReference>
<dbReference type="SMR" id="A9KTV7"/>
<dbReference type="GeneID" id="11772932"/>
<dbReference type="KEGG" id="sbn:Sbal195_2846"/>
<dbReference type="HOGENOM" id="CLU_034547_0_2_6"/>
<dbReference type="UniPathway" id="UPA00053">
    <property type="reaction ID" value="UER00090"/>
</dbReference>
<dbReference type="Proteomes" id="UP000000770">
    <property type="component" value="Chromosome"/>
</dbReference>
<dbReference type="GO" id="GO:0005829">
    <property type="term" value="C:cytosol"/>
    <property type="evidence" value="ECO:0007669"/>
    <property type="project" value="TreeGrafter"/>
</dbReference>
<dbReference type="GO" id="GO:0004107">
    <property type="term" value="F:chorismate synthase activity"/>
    <property type="evidence" value="ECO:0007669"/>
    <property type="project" value="UniProtKB-UniRule"/>
</dbReference>
<dbReference type="GO" id="GO:0010181">
    <property type="term" value="F:FMN binding"/>
    <property type="evidence" value="ECO:0007669"/>
    <property type="project" value="TreeGrafter"/>
</dbReference>
<dbReference type="GO" id="GO:0008652">
    <property type="term" value="P:amino acid biosynthetic process"/>
    <property type="evidence" value="ECO:0007669"/>
    <property type="project" value="UniProtKB-KW"/>
</dbReference>
<dbReference type="GO" id="GO:0009073">
    <property type="term" value="P:aromatic amino acid family biosynthetic process"/>
    <property type="evidence" value="ECO:0007669"/>
    <property type="project" value="UniProtKB-KW"/>
</dbReference>
<dbReference type="GO" id="GO:0009423">
    <property type="term" value="P:chorismate biosynthetic process"/>
    <property type="evidence" value="ECO:0007669"/>
    <property type="project" value="UniProtKB-UniRule"/>
</dbReference>
<dbReference type="CDD" id="cd07304">
    <property type="entry name" value="Chorismate_synthase"/>
    <property type="match status" value="1"/>
</dbReference>
<dbReference type="FunFam" id="3.60.150.10:FF:000001">
    <property type="entry name" value="Chorismate synthase"/>
    <property type="match status" value="1"/>
</dbReference>
<dbReference type="Gene3D" id="3.60.150.10">
    <property type="entry name" value="Chorismate synthase AroC"/>
    <property type="match status" value="1"/>
</dbReference>
<dbReference type="HAMAP" id="MF_00300">
    <property type="entry name" value="Chorismate_synth"/>
    <property type="match status" value="1"/>
</dbReference>
<dbReference type="InterPro" id="IPR000453">
    <property type="entry name" value="Chorismate_synth"/>
</dbReference>
<dbReference type="InterPro" id="IPR035904">
    <property type="entry name" value="Chorismate_synth_AroC_sf"/>
</dbReference>
<dbReference type="InterPro" id="IPR020541">
    <property type="entry name" value="Chorismate_synthase_CS"/>
</dbReference>
<dbReference type="NCBIfam" id="TIGR00033">
    <property type="entry name" value="aroC"/>
    <property type="match status" value="1"/>
</dbReference>
<dbReference type="NCBIfam" id="NF003793">
    <property type="entry name" value="PRK05382.1"/>
    <property type="match status" value="1"/>
</dbReference>
<dbReference type="PANTHER" id="PTHR21085">
    <property type="entry name" value="CHORISMATE SYNTHASE"/>
    <property type="match status" value="1"/>
</dbReference>
<dbReference type="PANTHER" id="PTHR21085:SF0">
    <property type="entry name" value="CHORISMATE SYNTHASE"/>
    <property type="match status" value="1"/>
</dbReference>
<dbReference type="Pfam" id="PF01264">
    <property type="entry name" value="Chorismate_synt"/>
    <property type="match status" value="1"/>
</dbReference>
<dbReference type="PIRSF" id="PIRSF001456">
    <property type="entry name" value="Chorismate_synth"/>
    <property type="match status" value="1"/>
</dbReference>
<dbReference type="SUPFAM" id="SSF103263">
    <property type="entry name" value="Chorismate synthase, AroC"/>
    <property type="match status" value="1"/>
</dbReference>
<dbReference type="PROSITE" id="PS00787">
    <property type="entry name" value="CHORISMATE_SYNTHASE_1"/>
    <property type="match status" value="1"/>
</dbReference>
<dbReference type="PROSITE" id="PS00788">
    <property type="entry name" value="CHORISMATE_SYNTHASE_2"/>
    <property type="match status" value="1"/>
</dbReference>
<dbReference type="PROSITE" id="PS00789">
    <property type="entry name" value="CHORISMATE_SYNTHASE_3"/>
    <property type="match status" value="1"/>
</dbReference>
<organism>
    <name type="scientific">Shewanella baltica (strain OS195)</name>
    <dbReference type="NCBI Taxonomy" id="399599"/>
    <lineage>
        <taxon>Bacteria</taxon>
        <taxon>Pseudomonadati</taxon>
        <taxon>Pseudomonadota</taxon>
        <taxon>Gammaproteobacteria</taxon>
        <taxon>Alteromonadales</taxon>
        <taxon>Shewanellaceae</taxon>
        <taxon>Shewanella</taxon>
    </lineage>
</organism>
<gene>
    <name evidence="1" type="primary">aroC</name>
    <name type="ordered locus">Sbal195_2846</name>
</gene>
<accession>A9KTV7</accession>
<name>AROC_SHEB9</name>
<proteinExistence type="inferred from homology"/>
<evidence type="ECO:0000255" key="1">
    <source>
        <dbReference type="HAMAP-Rule" id="MF_00300"/>
    </source>
</evidence>
<evidence type="ECO:0000256" key="2">
    <source>
        <dbReference type="SAM" id="MobiDB-lite"/>
    </source>
</evidence>
<keyword id="KW-0028">Amino-acid biosynthesis</keyword>
<keyword id="KW-0057">Aromatic amino acid biosynthesis</keyword>
<keyword id="KW-0274">FAD</keyword>
<keyword id="KW-0285">Flavoprotein</keyword>
<keyword id="KW-0288">FMN</keyword>
<keyword id="KW-0456">Lyase</keyword>
<keyword id="KW-0521">NADP</keyword>
<sequence length="364" mass="39111">MSGNSIGQNFVVTTFGESHGVALGCIIDGCPPGLELTEADMQHDLDRRRPGTSRYTTARREPDEVRILSGVFEGKTTGTSIGLLIENTDQRSQDYSNIKDLFRPGHADYTYQQKYGMRDYRGGGRSSARETAMRVAAGAVAKKYLKQVHGIEIYGFMSQLGPICAQTIDLDQIEQNAFFFPDASKLEALDEYMRELKKSGDSIGAKISVIATGVPVGLGEPVFDRLDADIAHALMGINAVKGVEIGDGFGVVTQKGSEGRDLMSPQGFESNHAGGVLGGISSGQPIIAHIALKPTSSISVPGQSMTAQGEMAEVVTKGRHDPCVGIRAVPIAEAMLAIVLMDHLLRHRAQNQDVRSHTPVLGMR</sequence>
<comment type="function">
    <text evidence="1">Catalyzes the anti-1,4-elimination of the C-3 phosphate and the C-6 proR hydrogen from 5-enolpyruvylshikimate-3-phosphate (EPSP) to yield chorismate, which is the branch point compound that serves as the starting substrate for the three terminal pathways of aromatic amino acid biosynthesis. This reaction introduces a second double bond into the aromatic ring system.</text>
</comment>
<comment type="catalytic activity">
    <reaction evidence="1">
        <text>5-O-(1-carboxyvinyl)-3-phosphoshikimate = chorismate + phosphate</text>
        <dbReference type="Rhea" id="RHEA:21020"/>
        <dbReference type="ChEBI" id="CHEBI:29748"/>
        <dbReference type="ChEBI" id="CHEBI:43474"/>
        <dbReference type="ChEBI" id="CHEBI:57701"/>
        <dbReference type="EC" id="4.2.3.5"/>
    </reaction>
</comment>
<comment type="cofactor">
    <cofactor evidence="1">
        <name>FMNH2</name>
        <dbReference type="ChEBI" id="CHEBI:57618"/>
    </cofactor>
    <text evidence="1">Reduced FMN (FMNH(2)).</text>
</comment>
<comment type="pathway">
    <text evidence="1">Metabolic intermediate biosynthesis; chorismate biosynthesis; chorismate from D-erythrose 4-phosphate and phosphoenolpyruvate: step 7/7.</text>
</comment>
<comment type="subunit">
    <text evidence="1">Homotetramer.</text>
</comment>
<comment type="similarity">
    <text evidence="1">Belongs to the chorismate synthase family.</text>
</comment>
<reference key="1">
    <citation type="submission" date="2007-11" db="EMBL/GenBank/DDBJ databases">
        <title>Complete sequence of chromosome of Shewanella baltica OS195.</title>
        <authorList>
            <consortium name="US DOE Joint Genome Institute"/>
            <person name="Copeland A."/>
            <person name="Lucas S."/>
            <person name="Lapidus A."/>
            <person name="Barry K."/>
            <person name="Glavina del Rio T."/>
            <person name="Dalin E."/>
            <person name="Tice H."/>
            <person name="Pitluck S."/>
            <person name="Chain P."/>
            <person name="Malfatti S."/>
            <person name="Shin M."/>
            <person name="Vergez L."/>
            <person name="Schmutz J."/>
            <person name="Larimer F."/>
            <person name="Land M."/>
            <person name="Hauser L."/>
            <person name="Kyrpides N."/>
            <person name="Kim E."/>
            <person name="Brettar I."/>
            <person name="Rodrigues J."/>
            <person name="Konstantinidis K."/>
            <person name="Klappenbach J."/>
            <person name="Hofle M."/>
            <person name="Tiedje J."/>
            <person name="Richardson P."/>
        </authorList>
    </citation>
    <scope>NUCLEOTIDE SEQUENCE [LARGE SCALE GENOMIC DNA]</scope>
    <source>
        <strain>OS195</strain>
    </source>
</reference>
<protein>
    <recommendedName>
        <fullName evidence="1">Chorismate synthase</fullName>
        <shortName evidence="1">CS</shortName>
        <ecNumber evidence="1">4.2.3.5</ecNumber>
    </recommendedName>
    <alternativeName>
        <fullName evidence="1">5-enolpyruvylshikimate-3-phosphate phospholyase</fullName>
    </alternativeName>
</protein>
<feature type="chain" id="PRO_1000079009" description="Chorismate synthase">
    <location>
        <begin position="1"/>
        <end position="364"/>
    </location>
</feature>
<feature type="region of interest" description="Disordered" evidence="2">
    <location>
        <begin position="41"/>
        <end position="60"/>
    </location>
</feature>
<feature type="binding site" evidence="1">
    <location>
        <position position="48"/>
    </location>
    <ligand>
        <name>NADP(+)</name>
        <dbReference type="ChEBI" id="CHEBI:58349"/>
    </ligand>
</feature>
<feature type="binding site" evidence="1">
    <location>
        <position position="54"/>
    </location>
    <ligand>
        <name>NADP(+)</name>
        <dbReference type="ChEBI" id="CHEBI:58349"/>
    </ligand>
</feature>
<feature type="binding site" evidence="1">
    <location>
        <begin position="125"/>
        <end position="127"/>
    </location>
    <ligand>
        <name>FMN</name>
        <dbReference type="ChEBI" id="CHEBI:58210"/>
    </ligand>
</feature>
<feature type="binding site" evidence="1">
    <location>
        <begin position="238"/>
        <end position="239"/>
    </location>
    <ligand>
        <name>FMN</name>
        <dbReference type="ChEBI" id="CHEBI:58210"/>
    </ligand>
</feature>
<feature type="binding site" evidence="1">
    <location>
        <position position="278"/>
    </location>
    <ligand>
        <name>FMN</name>
        <dbReference type="ChEBI" id="CHEBI:58210"/>
    </ligand>
</feature>
<feature type="binding site" evidence="1">
    <location>
        <begin position="293"/>
        <end position="297"/>
    </location>
    <ligand>
        <name>FMN</name>
        <dbReference type="ChEBI" id="CHEBI:58210"/>
    </ligand>
</feature>
<feature type="binding site" evidence="1">
    <location>
        <position position="319"/>
    </location>
    <ligand>
        <name>FMN</name>
        <dbReference type="ChEBI" id="CHEBI:58210"/>
    </ligand>
</feature>